<reference key="1">
    <citation type="journal article" date="2005" name="Nat. Biotechnol.">
        <title>The genome sequence of the ethanologenic bacterium Zymomonas mobilis ZM4.</title>
        <authorList>
            <person name="Seo J.-S."/>
            <person name="Chong H."/>
            <person name="Park H.S."/>
            <person name="Yoon K.-O."/>
            <person name="Jung C."/>
            <person name="Kim J.J."/>
            <person name="Hong J.H."/>
            <person name="Kim H."/>
            <person name="Kim J.-H."/>
            <person name="Kil J.-I."/>
            <person name="Park C.J."/>
            <person name="Oh H.-M."/>
            <person name="Lee J.-S."/>
            <person name="Jin S.-J."/>
            <person name="Um H.-W."/>
            <person name="Lee H.-J."/>
            <person name="Oh S.-J."/>
            <person name="Kim J.Y."/>
            <person name="Kang H.L."/>
            <person name="Lee S.Y."/>
            <person name="Lee K.J."/>
            <person name="Kang H.S."/>
        </authorList>
    </citation>
    <scope>NUCLEOTIDE SEQUENCE [LARGE SCALE GENOMIC DNA]</scope>
    <source>
        <strain>ATCC 31821 / ZM4 / CP4</strain>
    </source>
</reference>
<keyword id="KW-0004">4Fe-4S</keyword>
<keyword id="KW-0963">Cytoplasm</keyword>
<keyword id="KW-1015">Disulfide bond</keyword>
<keyword id="KW-0408">Iron</keyword>
<keyword id="KW-0411">Iron-sulfur</keyword>
<keyword id="KW-0479">Metal-binding</keyword>
<keyword id="KW-0489">Methyltransferase</keyword>
<keyword id="KW-1185">Reference proteome</keyword>
<keyword id="KW-0698">rRNA processing</keyword>
<keyword id="KW-0949">S-adenosyl-L-methionine</keyword>
<keyword id="KW-0808">Transferase</keyword>
<keyword id="KW-0819">tRNA processing</keyword>
<name>RLMN_ZYMMO</name>
<accession>Q5NNQ4</accession>
<comment type="function">
    <text evidence="1">Specifically methylates position 2 of adenine 2503 in 23S rRNA and position 2 of adenine 37 in tRNAs. m2A2503 modification seems to play a crucial role in the proofreading step occurring at the peptidyl transferase center and thus would serve to optimize ribosomal fidelity.</text>
</comment>
<comment type="catalytic activity">
    <reaction evidence="1">
        <text>adenosine(2503) in 23S rRNA + 2 reduced [2Fe-2S]-[ferredoxin] + 2 S-adenosyl-L-methionine = 2-methyladenosine(2503) in 23S rRNA + 5'-deoxyadenosine + L-methionine + 2 oxidized [2Fe-2S]-[ferredoxin] + S-adenosyl-L-homocysteine</text>
        <dbReference type="Rhea" id="RHEA:42916"/>
        <dbReference type="Rhea" id="RHEA-COMP:10000"/>
        <dbReference type="Rhea" id="RHEA-COMP:10001"/>
        <dbReference type="Rhea" id="RHEA-COMP:10152"/>
        <dbReference type="Rhea" id="RHEA-COMP:10282"/>
        <dbReference type="ChEBI" id="CHEBI:17319"/>
        <dbReference type="ChEBI" id="CHEBI:33737"/>
        <dbReference type="ChEBI" id="CHEBI:33738"/>
        <dbReference type="ChEBI" id="CHEBI:57844"/>
        <dbReference type="ChEBI" id="CHEBI:57856"/>
        <dbReference type="ChEBI" id="CHEBI:59789"/>
        <dbReference type="ChEBI" id="CHEBI:74411"/>
        <dbReference type="ChEBI" id="CHEBI:74497"/>
        <dbReference type="EC" id="2.1.1.192"/>
    </reaction>
</comment>
<comment type="catalytic activity">
    <reaction evidence="1">
        <text>adenosine(37) in tRNA + 2 reduced [2Fe-2S]-[ferredoxin] + 2 S-adenosyl-L-methionine = 2-methyladenosine(37) in tRNA + 5'-deoxyadenosine + L-methionine + 2 oxidized [2Fe-2S]-[ferredoxin] + S-adenosyl-L-homocysteine</text>
        <dbReference type="Rhea" id="RHEA:43332"/>
        <dbReference type="Rhea" id="RHEA-COMP:10000"/>
        <dbReference type="Rhea" id="RHEA-COMP:10001"/>
        <dbReference type="Rhea" id="RHEA-COMP:10162"/>
        <dbReference type="Rhea" id="RHEA-COMP:10485"/>
        <dbReference type="ChEBI" id="CHEBI:17319"/>
        <dbReference type="ChEBI" id="CHEBI:33737"/>
        <dbReference type="ChEBI" id="CHEBI:33738"/>
        <dbReference type="ChEBI" id="CHEBI:57844"/>
        <dbReference type="ChEBI" id="CHEBI:57856"/>
        <dbReference type="ChEBI" id="CHEBI:59789"/>
        <dbReference type="ChEBI" id="CHEBI:74411"/>
        <dbReference type="ChEBI" id="CHEBI:74497"/>
        <dbReference type="EC" id="2.1.1.192"/>
    </reaction>
</comment>
<comment type="cofactor">
    <cofactor evidence="1">
        <name>[4Fe-4S] cluster</name>
        <dbReference type="ChEBI" id="CHEBI:49883"/>
    </cofactor>
    <text evidence="1">Binds 1 [4Fe-4S] cluster. The cluster is coordinated with 3 cysteines and an exchangeable S-adenosyl-L-methionine.</text>
</comment>
<comment type="subcellular location">
    <subcellularLocation>
        <location evidence="1">Cytoplasm</location>
    </subcellularLocation>
</comment>
<comment type="miscellaneous">
    <text evidence="1">Reaction proceeds by a ping-pong mechanism involving intermediate methylation of a conserved cysteine residue.</text>
</comment>
<comment type="similarity">
    <text evidence="1">Belongs to the radical SAM superfamily. RlmN family.</text>
</comment>
<sequence>MTSVVADSLTETKTDSQKPIATRKDGRIDLLGLSREDIRAALKSKGLDEKQAKLRTKQLWHWMYNRGAVAFDGMTDIAKTMRPWLAEHFAISRPEVVTMQISTDGTRKWLLKTDDGYDYEMVFIPDADRGTLCISSQIGCTLNCRFCNTGTMRLVRNLTVGEIVGQIMLARDSLDEWPSKPEGRLLTNVVMMGMGEPLYNFDNVRDALKLVMDGDGIALSRRRITLSTSGVVPMMARAGEEIGVNLAVSLHAVTKVVRDEIVPINKKYGIDELLAACAAYPGVNNARRITFEYVMLKDKNDSEEDAHELVRLLQYYRLPAKVNLIPFNPWPNSPYECSTPERIARFSEIVFNAGISAPVRRTRGQDIMAACGQLKSAAERQSKRDSMITLS</sequence>
<organism>
    <name type="scientific">Zymomonas mobilis subsp. mobilis (strain ATCC 31821 / ZM4 / CP4)</name>
    <dbReference type="NCBI Taxonomy" id="264203"/>
    <lineage>
        <taxon>Bacteria</taxon>
        <taxon>Pseudomonadati</taxon>
        <taxon>Pseudomonadota</taxon>
        <taxon>Alphaproteobacteria</taxon>
        <taxon>Sphingomonadales</taxon>
        <taxon>Zymomonadaceae</taxon>
        <taxon>Zymomonas</taxon>
    </lineage>
</organism>
<evidence type="ECO:0000255" key="1">
    <source>
        <dbReference type="HAMAP-Rule" id="MF_01849"/>
    </source>
</evidence>
<evidence type="ECO:0000255" key="2">
    <source>
        <dbReference type="PROSITE-ProRule" id="PRU01266"/>
    </source>
</evidence>
<evidence type="ECO:0000256" key="3">
    <source>
        <dbReference type="SAM" id="MobiDB-lite"/>
    </source>
</evidence>
<feature type="chain" id="PRO_0000350547" description="Dual-specificity RNA methyltransferase RlmN">
    <location>
        <begin position="1"/>
        <end position="391"/>
    </location>
</feature>
<feature type="domain" description="Radical SAM core" evidence="2">
    <location>
        <begin position="126"/>
        <end position="366"/>
    </location>
</feature>
<feature type="region of interest" description="Disordered" evidence="3">
    <location>
        <begin position="1"/>
        <end position="20"/>
    </location>
</feature>
<feature type="compositionally biased region" description="Basic and acidic residues" evidence="3">
    <location>
        <begin position="10"/>
        <end position="20"/>
    </location>
</feature>
<feature type="active site" description="Proton acceptor" evidence="1">
    <location>
        <position position="120"/>
    </location>
</feature>
<feature type="active site" description="S-methylcysteine intermediate" evidence="1">
    <location>
        <position position="371"/>
    </location>
</feature>
<feature type="binding site" evidence="1">
    <location>
        <position position="140"/>
    </location>
    <ligand>
        <name>[4Fe-4S] cluster</name>
        <dbReference type="ChEBI" id="CHEBI:49883"/>
        <note>4Fe-4S-S-AdoMet</note>
    </ligand>
</feature>
<feature type="binding site" evidence="1">
    <location>
        <position position="144"/>
    </location>
    <ligand>
        <name>[4Fe-4S] cluster</name>
        <dbReference type="ChEBI" id="CHEBI:49883"/>
        <note>4Fe-4S-S-AdoMet</note>
    </ligand>
</feature>
<feature type="binding site" evidence="1">
    <location>
        <position position="147"/>
    </location>
    <ligand>
        <name>[4Fe-4S] cluster</name>
        <dbReference type="ChEBI" id="CHEBI:49883"/>
        <note>4Fe-4S-S-AdoMet</note>
    </ligand>
</feature>
<feature type="binding site" evidence="1">
    <location>
        <begin position="195"/>
        <end position="196"/>
    </location>
    <ligand>
        <name>S-adenosyl-L-methionine</name>
        <dbReference type="ChEBI" id="CHEBI:59789"/>
    </ligand>
</feature>
<feature type="binding site" evidence="1">
    <location>
        <position position="227"/>
    </location>
    <ligand>
        <name>S-adenosyl-L-methionine</name>
        <dbReference type="ChEBI" id="CHEBI:59789"/>
    </ligand>
</feature>
<feature type="binding site" evidence="1">
    <location>
        <begin position="249"/>
        <end position="251"/>
    </location>
    <ligand>
        <name>S-adenosyl-L-methionine</name>
        <dbReference type="ChEBI" id="CHEBI:59789"/>
    </ligand>
</feature>
<feature type="binding site" evidence="1">
    <location>
        <position position="328"/>
    </location>
    <ligand>
        <name>S-adenosyl-L-methionine</name>
        <dbReference type="ChEBI" id="CHEBI:59789"/>
    </ligand>
</feature>
<feature type="disulfide bond" description="(transient)" evidence="1">
    <location>
        <begin position="133"/>
        <end position="371"/>
    </location>
</feature>
<proteinExistence type="inferred from homology"/>
<gene>
    <name evidence="1" type="primary">rlmN</name>
    <name type="ordered locus">ZMO1032</name>
</gene>
<dbReference type="EC" id="2.1.1.192" evidence="1"/>
<dbReference type="EMBL" id="AE008692">
    <property type="protein sequence ID" value="AAV89656.1"/>
    <property type="molecule type" value="Genomic_DNA"/>
</dbReference>
<dbReference type="RefSeq" id="WP_011240877.1">
    <property type="nucleotide sequence ID" value="NZ_CP035711.1"/>
</dbReference>
<dbReference type="SMR" id="Q5NNQ4"/>
<dbReference type="STRING" id="264203.ZMO1032"/>
<dbReference type="KEGG" id="zmo:ZMO1032"/>
<dbReference type="eggNOG" id="COG0820">
    <property type="taxonomic scope" value="Bacteria"/>
</dbReference>
<dbReference type="HOGENOM" id="CLU_029101_0_0_5"/>
<dbReference type="Proteomes" id="UP000001173">
    <property type="component" value="Chromosome"/>
</dbReference>
<dbReference type="GO" id="GO:0005737">
    <property type="term" value="C:cytoplasm"/>
    <property type="evidence" value="ECO:0007669"/>
    <property type="project" value="UniProtKB-SubCell"/>
</dbReference>
<dbReference type="GO" id="GO:0051539">
    <property type="term" value="F:4 iron, 4 sulfur cluster binding"/>
    <property type="evidence" value="ECO:0007669"/>
    <property type="project" value="UniProtKB-UniRule"/>
</dbReference>
<dbReference type="GO" id="GO:0046872">
    <property type="term" value="F:metal ion binding"/>
    <property type="evidence" value="ECO:0007669"/>
    <property type="project" value="UniProtKB-KW"/>
</dbReference>
<dbReference type="GO" id="GO:0070040">
    <property type="term" value="F:rRNA (adenine(2503)-C2-)-methyltransferase activity"/>
    <property type="evidence" value="ECO:0007669"/>
    <property type="project" value="UniProtKB-UniRule"/>
</dbReference>
<dbReference type="GO" id="GO:0019843">
    <property type="term" value="F:rRNA binding"/>
    <property type="evidence" value="ECO:0007669"/>
    <property type="project" value="UniProtKB-UniRule"/>
</dbReference>
<dbReference type="GO" id="GO:0002935">
    <property type="term" value="F:tRNA (adenine(37)-C2)-methyltransferase activity"/>
    <property type="evidence" value="ECO:0007669"/>
    <property type="project" value="UniProtKB-UniRule"/>
</dbReference>
<dbReference type="GO" id="GO:0000049">
    <property type="term" value="F:tRNA binding"/>
    <property type="evidence" value="ECO:0007669"/>
    <property type="project" value="UniProtKB-UniRule"/>
</dbReference>
<dbReference type="GO" id="GO:0070475">
    <property type="term" value="P:rRNA base methylation"/>
    <property type="evidence" value="ECO:0007669"/>
    <property type="project" value="UniProtKB-UniRule"/>
</dbReference>
<dbReference type="GO" id="GO:0030488">
    <property type="term" value="P:tRNA methylation"/>
    <property type="evidence" value="ECO:0007669"/>
    <property type="project" value="UniProtKB-UniRule"/>
</dbReference>
<dbReference type="CDD" id="cd01335">
    <property type="entry name" value="Radical_SAM"/>
    <property type="match status" value="1"/>
</dbReference>
<dbReference type="FunFam" id="3.20.20.70:FF:000008">
    <property type="entry name" value="Dual-specificity RNA methyltransferase RlmN"/>
    <property type="match status" value="1"/>
</dbReference>
<dbReference type="Gene3D" id="1.10.150.530">
    <property type="match status" value="1"/>
</dbReference>
<dbReference type="Gene3D" id="3.20.20.70">
    <property type="entry name" value="Aldolase class I"/>
    <property type="match status" value="1"/>
</dbReference>
<dbReference type="HAMAP" id="MF_01849">
    <property type="entry name" value="RNA_methyltr_RlmN"/>
    <property type="match status" value="1"/>
</dbReference>
<dbReference type="InterPro" id="IPR013785">
    <property type="entry name" value="Aldolase_TIM"/>
</dbReference>
<dbReference type="InterPro" id="IPR040072">
    <property type="entry name" value="Methyltransferase_A"/>
</dbReference>
<dbReference type="InterPro" id="IPR048641">
    <property type="entry name" value="RlmN_N"/>
</dbReference>
<dbReference type="InterPro" id="IPR027492">
    <property type="entry name" value="RNA_MTrfase_RlmN"/>
</dbReference>
<dbReference type="InterPro" id="IPR004383">
    <property type="entry name" value="rRNA_lsu_MTrfase_RlmN/Cfr"/>
</dbReference>
<dbReference type="InterPro" id="IPR007197">
    <property type="entry name" value="rSAM"/>
</dbReference>
<dbReference type="NCBIfam" id="TIGR00048">
    <property type="entry name" value="rRNA_mod_RlmN"/>
    <property type="match status" value="1"/>
</dbReference>
<dbReference type="PANTHER" id="PTHR30544">
    <property type="entry name" value="23S RRNA METHYLTRANSFERASE"/>
    <property type="match status" value="1"/>
</dbReference>
<dbReference type="PANTHER" id="PTHR30544:SF5">
    <property type="entry name" value="RADICAL SAM CORE DOMAIN-CONTAINING PROTEIN"/>
    <property type="match status" value="1"/>
</dbReference>
<dbReference type="Pfam" id="PF04055">
    <property type="entry name" value="Radical_SAM"/>
    <property type="match status" value="1"/>
</dbReference>
<dbReference type="Pfam" id="PF21016">
    <property type="entry name" value="RlmN_N"/>
    <property type="match status" value="1"/>
</dbReference>
<dbReference type="PIRSF" id="PIRSF006004">
    <property type="entry name" value="CHP00048"/>
    <property type="match status" value="1"/>
</dbReference>
<dbReference type="SFLD" id="SFLDF00275">
    <property type="entry name" value="adenosine_C2_methyltransferase"/>
    <property type="match status" value="1"/>
</dbReference>
<dbReference type="SFLD" id="SFLDG01062">
    <property type="entry name" value="methyltransferase_(Class_A)"/>
    <property type="match status" value="1"/>
</dbReference>
<dbReference type="SUPFAM" id="SSF102114">
    <property type="entry name" value="Radical SAM enzymes"/>
    <property type="match status" value="1"/>
</dbReference>
<dbReference type="PROSITE" id="PS51918">
    <property type="entry name" value="RADICAL_SAM"/>
    <property type="match status" value="1"/>
</dbReference>
<protein>
    <recommendedName>
        <fullName evidence="1">Dual-specificity RNA methyltransferase RlmN</fullName>
        <ecNumber evidence="1">2.1.1.192</ecNumber>
    </recommendedName>
    <alternativeName>
        <fullName evidence="1">23S rRNA (adenine(2503)-C(2))-methyltransferase</fullName>
    </alternativeName>
    <alternativeName>
        <fullName evidence="1">23S rRNA m2A2503 methyltransferase</fullName>
    </alternativeName>
    <alternativeName>
        <fullName evidence="1">Ribosomal RNA large subunit methyltransferase N</fullName>
    </alternativeName>
    <alternativeName>
        <fullName evidence="1">tRNA (adenine(37)-C(2))-methyltransferase</fullName>
    </alternativeName>
    <alternativeName>
        <fullName evidence="1">tRNA m2A37 methyltransferase</fullName>
    </alternativeName>
</protein>